<name>UB2D3_HUMAN</name>
<accession>P61077</accession>
<accession>A6NJ93</accession>
<accession>A6NJB1</accession>
<accession>A6NM99</accession>
<accession>P47986</accession>
<accession>Q6IB88</accession>
<accession>Q6NXS4</accession>
<accession>Q8N924</accession>
<feature type="chain" id="PRO_0000082466" description="Ubiquitin-conjugating enzyme E2 D3">
    <location>
        <begin position="1"/>
        <end position="147"/>
    </location>
</feature>
<feature type="domain" description="UBC core" evidence="2">
    <location>
        <begin position="1"/>
        <end position="147"/>
    </location>
</feature>
<feature type="active site" description="Glycyl thioester intermediate" evidence="2 3">
    <location>
        <position position="85"/>
    </location>
</feature>
<feature type="disulfide bond" evidence="27">
    <location>
        <begin position="21"/>
        <end position="107"/>
    </location>
</feature>
<feature type="splice variant" id="VSP_038096" description="In isoform 3." evidence="29">
    <original>MALKRINK</original>
    <variation>MLSNRKCLSK</variation>
    <location>
        <begin position="1"/>
        <end position="8"/>
    </location>
</feature>
<feature type="splice variant" id="VSP_038097" description="In isoform 2." evidence="29">
    <original>YNRISREWTQKYAM</original>
    <variation>YNRLAREWTEKYAML</variation>
    <location>
        <begin position="134"/>
        <end position="147"/>
    </location>
</feature>
<feature type="mutagenesis site" description="Activity is restricted HECT-type and not RING-containing E3 ubiquitin-protein ligases. Exhibits ubiquitin transfer with ARIH1 and PRKN." evidence="21">
    <original>N</original>
    <variation>S</variation>
    <location>
        <position position="77"/>
    </location>
</feature>
<feature type="mutagenesis site" description="Loss of function." evidence="4">
    <original>C</original>
    <variation>A</variation>
    <location>
        <position position="85"/>
    </location>
</feature>
<feature type="mutagenesis site" description="Has intermediate lysine reactivity." evidence="21">
    <original>D</original>
    <variation>E</variation>
    <variation>P</variation>
    <location>
        <position position="87"/>
    </location>
</feature>
<feature type="mutagenesis site" description="Abolishes affect lysine reactivity." evidence="21">
    <original>D</original>
    <variation>K</variation>
    <location>
        <position position="87"/>
    </location>
</feature>
<feature type="mutagenesis site" description="Does not affect lysine reactivity." evidence="21">
    <original>D</original>
    <variation>N</variation>
    <location>
        <position position="87"/>
    </location>
</feature>
<feature type="mutagenesis site" description="Strongly impairs lysine reactivity but retains some ability to transfer ubiquitin to BRCA1." evidence="21">
    <original>D</original>
    <variation>H</variation>
    <location>
        <position position="117"/>
    </location>
</feature>
<feature type="sequence conflict" description="In Ref. 3; DB045280." evidence="30" ref="3">
    <location>
        <position position="50"/>
    </location>
</feature>
<feature type="sequence conflict" description="In Ref. 7; AAH66917." evidence="30" ref="7">
    <original>I</original>
    <variation>L</variation>
    <location>
        <position position="123"/>
    </location>
</feature>
<feature type="sequence conflict" description="In Ref. 3; CAG33197." evidence="30" ref="3">
    <original>I</original>
    <variation>V</variation>
    <location>
        <position position="137"/>
    </location>
</feature>
<feature type="sequence conflict" description="In Ref. 3; CAG33197." evidence="30" ref="3">
    <original>M</original>
    <variation>I</variation>
    <location>
        <position position="147"/>
    </location>
</feature>
<feature type="helix" evidence="34">
    <location>
        <begin position="1"/>
        <end position="15"/>
    </location>
</feature>
<feature type="strand" evidence="31">
    <location>
        <begin position="19"/>
        <end position="21"/>
    </location>
</feature>
<feature type="strand" evidence="34">
    <location>
        <begin position="22"/>
        <end position="28"/>
    </location>
</feature>
<feature type="strand" evidence="34">
    <location>
        <begin position="32"/>
        <end position="38"/>
    </location>
</feature>
<feature type="strand" evidence="33">
    <location>
        <begin position="41"/>
        <end position="43"/>
    </location>
</feature>
<feature type="turn" evidence="34">
    <location>
        <begin position="44"/>
        <end position="47"/>
    </location>
</feature>
<feature type="strand" evidence="34">
    <location>
        <begin position="49"/>
        <end position="55"/>
    </location>
</feature>
<feature type="turn" evidence="34">
    <location>
        <begin position="58"/>
        <end position="61"/>
    </location>
</feature>
<feature type="strand" evidence="34">
    <location>
        <begin position="66"/>
        <end position="71"/>
    </location>
</feature>
<feature type="strand" evidence="36">
    <location>
        <begin position="76"/>
        <end position="78"/>
    </location>
</feature>
<feature type="strand" evidence="32">
    <location>
        <begin position="80"/>
        <end position="84"/>
    </location>
</feature>
<feature type="helix" evidence="34">
    <location>
        <begin position="87"/>
        <end position="89"/>
    </location>
</feature>
<feature type="turn" evidence="34">
    <location>
        <begin position="90"/>
        <end position="92"/>
    </location>
</feature>
<feature type="helix" evidence="34">
    <location>
        <begin position="99"/>
        <end position="111"/>
    </location>
</feature>
<feature type="strand" evidence="35">
    <location>
        <begin position="115"/>
        <end position="117"/>
    </location>
</feature>
<feature type="helix" evidence="34">
    <location>
        <begin position="121"/>
        <end position="129"/>
    </location>
</feature>
<feature type="helix" evidence="34">
    <location>
        <begin position="131"/>
        <end position="145"/>
    </location>
</feature>
<dbReference type="EC" id="2.3.2.23" evidence="18 25"/>
<dbReference type="EC" id="2.3.2.24" evidence="12"/>
<dbReference type="EMBL" id="U39318">
    <property type="protein sequence ID" value="AAA91461.1"/>
    <property type="molecule type" value="mRNA"/>
</dbReference>
<dbReference type="EMBL" id="AF213884">
    <property type="protein sequence ID" value="AAF35234.1"/>
    <property type="molecule type" value="Genomic_DNA"/>
</dbReference>
<dbReference type="EMBL" id="AK095822">
    <property type="protein sequence ID" value="BAC04632.1"/>
    <property type="molecule type" value="mRNA"/>
</dbReference>
<dbReference type="EMBL" id="DB045280">
    <property type="status" value="NOT_ANNOTATED_CDS"/>
    <property type="molecule type" value="mRNA"/>
</dbReference>
<dbReference type="EMBL" id="CR456916">
    <property type="protein sequence ID" value="CAG33197.1"/>
    <property type="molecule type" value="mRNA"/>
</dbReference>
<dbReference type="EMBL" id="AC018797">
    <property type="status" value="NOT_ANNOTATED_CDS"/>
    <property type="molecule type" value="Genomic_DNA"/>
</dbReference>
<dbReference type="EMBL" id="CH471057">
    <property type="protein sequence ID" value="EAX06138.1"/>
    <property type="molecule type" value="Genomic_DNA"/>
</dbReference>
<dbReference type="EMBL" id="CH471057">
    <property type="protein sequence ID" value="EAX06143.1"/>
    <property type="molecule type" value="Genomic_DNA"/>
</dbReference>
<dbReference type="EMBL" id="BC003395">
    <property type="protein sequence ID" value="AAH03395.1"/>
    <property type="molecule type" value="mRNA"/>
</dbReference>
<dbReference type="EMBL" id="BC037894">
    <property type="protein sequence ID" value="AAH37894.1"/>
    <property type="molecule type" value="mRNA"/>
</dbReference>
<dbReference type="EMBL" id="BC066917">
    <property type="protein sequence ID" value="AAH66917.1"/>
    <property type="molecule type" value="mRNA"/>
</dbReference>
<dbReference type="CCDS" id="CCDS3659.1">
    <molecule id="P61077-3"/>
</dbReference>
<dbReference type="CCDS" id="CCDS3660.1">
    <molecule id="P61077-1"/>
</dbReference>
<dbReference type="CCDS" id="CCDS3661.1">
    <molecule id="P61077-2"/>
</dbReference>
<dbReference type="RefSeq" id="NP_003331.1">
    <molecule id="P61077-1"/>
    <property type="nucleotide sequence ID" value="NM_003340.6"/>
</dbReference>
<dbReference type="RefSeq" id="NP_871615.1">
    <molecule id="P61077-1"/>
    <property type="nucleotide sequence ID" value="NM_181886.3"/>
</dbReference>
<dbReference type="RefSeq" id="NP_871616.1">
    <molecule id="P61077-1"/>
    <property type="nucleotide sequence ID" value="NM_181887.3"/>
</dbReference>
<dbReference type="RefSeq" id="NP_871617.1">
    <molecule id="P61077-1"/>
    <property type="nucleotide sequence ID" value="NM_181888.3"/>
</dbReference>
<dbReference type="RefSeq" id="NP_871618.1">
    <molecule id="P61077-1"/>
    <property type="nucleotide sequence ID" value="NM_181889.2"/>
</dbReference>
<dbReference type="RefSeq" id="NP_871619.1">
    <molecule id="P61077-1"/>
    <property type="nucleotide sequence ID" value="NM_181890.3"/>
</dbReference>
<dbReference type="RefSeq" id="NP_871620.1">
    <molecule id="P61077-1"/>
    <property type="nucleotide sequence ID" value="NM_181891.3"/>
</dbReference>
<dbReference type="RefSeq" id="NP_871621.1">
    <molecule id="P61077-2"/>
    <property type="nucleotide sequence ID" value="NM_181892.4"/>
</dbReference>
<dbReference type="RefSeq" id="NP_871622.1">
    <molecule id="P61077-3"/>
    <property type="nucleotide sequence ID" value="NM_181893.3"/>
</dbReference>
<dbReference type="RefSeq" id="XP_024309970.1">
    <molecule id="P61077-1"/>
    <property type="nucleotide sequence ID" value="XM_024454202.2"/>
</dbReference>
<dbReference type="RefSeq" id="XP_054206763.1">
    <molecule id="P61077-1"/>
    <property type="nucleotide sequence ID" value="XM_054350788.1"/>
</dbReference>
<dbReference type="PDB" id="1X23">
    <property type="method" value="X-ray"/>
    <property type="resolution" value="1.85 A"/>
    <property type="chains" value="A/B/C/D=1-147"/>
</dbReference>
<dbReference type="PDB" id="2FUH">
    <property type="method" value="NMR"/>
    <property type="chains" value="A=2-147"/>
</dbReference>
<dbReference type="PDB" id="3L1Z">
    <property type="method" value="X-ray"/>
    <property type="resolution" value="3.17 A"/>
    <property type="chains" value="A=1-147"/>
</dbReference>
<dbReference type="PDB" id="3RPG">
    <property type="method" value="X-ray"/>
    <property type="resolution" value="2.65 A"/>
    <property type="chains" value="A=2-147"/>
</dbReference>
<dbReference type="PDB" id="3UGB">
    <property type="method" value="X-ray"/>
    <property type="resolution" value="2.35 A"/>
    <property type="chains" value="A=1-147"/>
</dbReference>
<dbReference type="PDB" id="4BVU">
    <property type="method" value="X-ray"/>
    <property type="resolution" value="2.70 A"/>
    <property type="chains" value="B=1-147"/>
</dbReference>
<dbReference type="PDB" id="4R8P">
    <property type="method" value="X-ray"/>
    <property type="resolution" value="3.28 A"/>
    <property type="chains" value="L/N=2-147"/>
</dbReference>
<dbReference type="PDB" id="4S3O">
    <property type="method" value="X-ray"/>
    <property type="resolution" value="2.00 A"/>
    <property type="chains" value="A/D=2-147"/>
</dbReference>
<dbReference type="PDB" id="5EGG">
    <property type="method" value="X-ray"/>
    <property type="resolution" value="1.76 A"/>
    <property type="chains" value="A=1-147"/>
</dbReference>
<dbReference type="PDB" id="5IFR">
    <property type="method" value="X-ray"/>
    <property type="resolution" value="2.20 A"/>
    <property type="chains" value="A=2-147"/>
</dbReference>
<dbReference type="PDB" id="6CP0">
    <property type="method" value="X-ray"/>
    <property type="resolution" value="3.01 A"/>
    <property type="chains" value="B=1-147"/>
</dbReference>
<dbReference type="PDB" id="6T7F">
    <property type="method" value="X-ray"/>
    <property type="resolution" value="2.58 A"/>
    <property type="chains" value="B=2-147"/>
</dbReference>
<dbReference type="PDB" id="7JZV">
    <property type="method" value="EM"/>
    <property type="resolution" value="3.90 A"/>
    <property type="chains" value="A=2-147"/>
</dbReference>
<dbReference type="PDB" id="7LYB">
    <property type="method" value="EM"/>
    <property type="resolution" value="3.28 A"/>
    <property type="chains" value="P=2-147"/>
</dbReference>
<dbReference type="PDB" id="8AMS">
    <property type="method" value="X-ray"/>
    <property type="resolution" value="2.40 A"/>
    <property type="chains" value="A/B=1-147"/>
</dbReference>
<dbReference type="PDB" id="8GRQ">
    <property type="method" value="EM"/>
    <property type="resolution" value="3.87 A"/>
    <property type="chains" value="N=1-147"/>
</dbReference>
<dbReference type="PDB" id="8SMW">
    <property type="method" value="EM"/>
    <property type="resolution" value="3.30 A"/>
    <property type="chains" value="L=1-147"/>
</dbReference>
<dbReference type="PDB" id="8SMX">
    <property type="method" value="EM"/>
    <property type="resolution" value="3.20 A"/>
    <property type="chains" value="L=1-147"/>
</dbReference>
<dbReference type="PDB" id="8SMY">
    <property type="method" value="EM"/>
    <property type="resolution" value="3.20 A"/>
    <property type="chains" value="L=1-147"/>
</dbReference>
<dbReference type="PDB" id="8SMZ">
    <property type="method" value="EM"/>
    <property type="resolution" value="3.20 A"/>
    <property type="chains" value="L=1-147"/>
</dbReference>
<dbReference type="PDB" id="8SN0">
    <property type="method" value="EM"/>
    <property type="resolution" value="3.20 A"/>
    <property type="chains" value="L=1-147"/>
</dbReference>
<dbReference type="PDB" id="8SN1">
    <property type="method" value="EM"/>
    <property type="resolution" value="3.30 A"/>
    <property type="chains" value="L=1-147"/>
</dbReference>
<dbReference type="PDB" id="8SN2">
    <property type="method" value="EM"/>
    <property type="resolution" value="3.60 A"/>
    <property type="chains" value="L=1-147"/>
</dbReference>
<dbReference type="PDB" id="8SN3">
    <property type="method" value="EM"/>
    <property type="resolution" value="3.80 A"/>
    <property type="chains" value="L=1-147"/>
</dbReference>
<dbReference type="PDB" id="8SN4">
    <property type="method" value="EM"/>
    <property type="resolution" value="3.70 A"/>
    <property type="chains" value="L=1-147"/>
</dbReference>
<dbReference type="PDB" id="8SN5">
    <property type="method" value="EM"/>
    <property type="resolution" value="3.90 A"/>
    <property type="chains" value="L=1-147"/>
</dbReference>
<dbReference type="PDB" id="8SN6">
    <property type="method" value="EM"/>
    <property type="resolution" value="3.70 A"/>
    <property type="chains" value="L=1-147"/>
</dbReference>
<dbReference type="PDB" id="8SN7">
    <property type="method" value="EM"/>
    <property type="resolution" value="3.70 A"/>
    <property type="chains" value="L=1-147"/>
</dbReference>
<dbReference type="PDB" id="8SN8">
    <property type="method" value="EM"/>
    <property type="resolution" value="3.70 A"/>
    <property type="chains" value="L=1-147"/>
</dbReference>
<dbReference type="PDB" id="8SN9">
    <property type="method" value="EM"/>
    <property type="resolution" value="3.90 A"/>
    <property type="chains" value="L=1-147"/>
</dbReference>
<dbReference type="PDB" id="8SNA">
    <property type="method" value="EM"/>
    <property type="resolution" value="4.00 A"/>
    <property type="chains" value="L=1-147"/>
</dbReference>
<dbReference type="PDB" id="8U14">
    <property type="method" value="EM"/>
    <property type="resolution" value="3.90 A"/>
    <property type="chains" value="L=2-147"/>
</dbReference>
<dbReference type="PDB" id="8UPF">
    <property type="method" value="EM"/>
    <property type="resolution" value="3.20 A"/>
    <property type="chains" value="L=2-147"/>
</dbReference>
<dbReference type="PDB" id="8UQ8">
    <property type="method" value="X-ray"/>
    <property type="resolution" value="2.34 A"/>
    <property type="chains" value="A/a=2-147"/>
</dbReference>
<dbReference type="PDB" id="8UQ9">
    <property type="method" value="X-ray"/>
    <property type="resolution" value="2.30 A"/>
    <property type="chains" value="A/a=2-147"/>
</dbReference>
<dbReference type="PDB" id="8UQA">
    <property type="method" value="X-ray"/>
    <property type="resolution" value="2.05 A"/>
    <property type="chains" value="K=2-147"/>
</dbReference>
<dbReference type="PDB" id="8UQB">
    <property type="method" value="X-ray"/>
    <property type="resolution" value="2.48 A"/>
    <property type="chains" value="A=2-147"/>
</dbReference>
<dbReference type="PDB" id="8UQC">
    <property type="method" value="X-ray"/>
    <property type="resolution" value="2.61 A"/>
    <property type="chains" value="A=2-147"/>
</dbReference>
<dbReference type="PDB" id="8UQD">
    <property type="method" value="X-ray"/>
    <property type="resolution" value="3.89 A"/>
    <property type="chains" value="B=2-147"/>
</dbReference>
<dbReference type="PDB" id="8UQE">
    <property type="method" value="X-ray"/>
    <property type="resolution" value="3.56 A"/>
    <property type="chains" value="B=2-147"/>
</dbReference>
<dbReference type="PDB" id="8X7I">
    <property type="method" value="EM"/>
    <property type="resolution" value="3.27 A"/>
    <property type="chains" value="K=1-147"/>
</dbReference>
<dbReference type="PDB" id="8X7J">
    <property type="method" value="EM"/>
    <property type="resolution" value="3.39 A"/>
    <property type="chains" value="K=1-147"/>
</dbReference>
<dbReference type="PDB" id="8X7K">
    <property type="method" value="EM"/>
    <property type="resolution" value="3.27 A"/>
    <property type="chains" value="K=1-147"/>
</dbReference>
<dbReference type="PDB" id="9IPU">
    <property type="method" value="EM"/>
    <property type="resolution" value="4.30 A"/>
    <property type="chains" value="K=1-147"/>
</dbReference>
<dbReference type="PDBsum" id="1X23"/>
<dbReference type="PDBsum" id="2FUH"/>
<dbReference type="PDBsum" id="3L1Z"/>
<dbReference type="PDBsum" id="3RPG"/>
<dbReference type="PDBsum" id="3UGB"/>
<dbReference type="PDBsum" id="4BVU"/>
<dbReference type="PDBsum" id="4R8P"/>
<dbReference type="PDBsum" id="4S3O"/>
<dbReference type="PDBsum" id="5EGG"/>
<dbReference type="PDBsum" id="5IFR"/>
<dbReference type="PDBsum" id="6CP0"/>
<dbReference type="PDBsum" id="6T7F"/>
<dbReference type="PDBsum" id="7JZV"/>
<dbReference type="PDBsum" id="7LYB"/>
<dbReference type="PDBsum" id="8AMS"/>
<dbReference type="PDBsum" id="8GRQ"/>
<dbReference type="PDBsum" id="8SMW"/>
<dbReference type="PDBsum" id="8SMX"/>
<dbReference type="PDBsum" id="8SMY"/>
<dbReference type="PDBsum" id="8SMZ"/>
<dbReference type="PDBsum" id="8SN0"/>
<dbReference type="PDBsum" id="8SN1"/>
<dbReference type="PDBsum" id="8SN2"/>
<dbReference type="PDBsum" id="8SN3"/>
<dbReference type="PDBsum" id="8SN4"/>
<dbReference type="PDBsum" id="8SN5"/>
<dbReference type="PDBsum" id="8SN6"/>
<dbReference type="PDBsum" id="8SN7"/>
<dbReference type="PDBsum" id="8SN8"/>
<dbReference type="PDBsum" id="8SN9"/>
<dbReference type="PDBsum" id="8SNA"/>
<dbReference type="PDBsum" id="8U14"/>
<dbReference type="PDBsum" id="8UPF"/>
<dbReference type="PDBsum" id="8UQ8"/>
<dbReference type="PDBsum" id="8UQ9"/>
<dbReference type="PDBsum" id="8UQA"/>
<dbReference type="PDBsum" id="8UQB"/>
<dbReference type="PDBsum" id="8UQC"/>
<dbReference type="PDBsum" id="8UQD"/>
<dbReference type="PDBsum" id="8UQE"/>
<dbReference type="PDBsum" id="8X7I"/>
<dbReference type="PDBsum" id="8X7J"/>
<dbReference type="PDBsum" id="8X7K"/>
<dbReference type="PDBsum" id="9IPU"/>
<dbReference type="BMRB" id="P61077"/>
<dbReference type="EMDB" id="EMD-22581"/>
<dbReference type="EMDB" id="EMD-23591"/>
<dbReference type="EMDB" id="EMD-34212"/>
<dbReference type="EMDB" id="EMD-38099"/>
<dbReference type="EMDB" id="EMD-38100"/>
<dbReference type="EMDB" id="EMD-38101"/>
<dbReference type="EMDB" id="EMD-40604"/>
<dbReference type="EMDB" id="EMD-40605"/>
<dbReference type="EMDB" id="EMD-40606"/>
<dbReference type="EMDB" id="EMD-40607"/>
<dbReference type="EMDB" id="EMD-40608"/>
<dbReference type="EMDB" id="EMD-40609"/>
<dbReference type="EMDB" id="EMD-40610"/>
<dbReference type="EMDB" id="EMD-40611"/>
<dbReference type="EMDB" id="EMD-40612"/>
<dbReference type="EMDB" id="EMD-40613"/>
<dbReference type="EMDB" id="EMD-40614"/>
<dbReference type="EMDB" id="EMD-40615"/>
<dbReference type="EMDB" id="EMD-40616"/>
<dbReference type="EMDB" id="EMD-40617"/>
<dbReference type="EMDB" id="EMD-40618"/>
<dbReference type="EMDB" id="EMD-41801"/>
<dbReference type="EMDB" id="EMD-42446"/>
<dbReference type="EMDB" id="EMD-60781"/>
<dbReference type="SMR" id="P61077"/>
<dbReference type="BioGRID" id="113171">
    <property type="interactions" value="305"/>
</dbReference>
<dbReference type="CORUM" id="P61077"/>
<dbReference type="DIP" id="DIP-29062N"/>
<dbReference type="FunCoup" id="P61077">
    <property type="interactions" value="3976"/>
</dbReference>
<dbReference type="IntAct" id="P61077">
    <property type="interactions" value="115"/>
</dbReference>
<dbReference type="MINT" id="P61077"/>
<dbReference type="BindingDB" id="P61077"/>
<dbReference type="ChEMBL" id="CHEMBL4105911"/>
<dbReference type="MoonDB" id="P61077">
    <property type="type" value="Predicted"/>
</dbReference>
<dbReference type="GlyGen" id="P61077">
    <property type="glycosylation" value="1 site, 1 O-linked glycan (1 site)"/>
</dbReference>
<dbReference type="iPTMnet" id="P61077"/>
<dbReference type="PhosphoSitePlus" id="P61077"/>
<dbReference type="SwissPalm" id="P61077"/>
<dbReference type="BioMuta" id="UBE2D3"/>
<dbReference type="DMDM" id="46577654"/>
<dbReference type="jPOST" id="P61077"/>
<dbReference type="MassIVE" id="P61077"/>
<dbReference type="PeptideAtlas" id="P61077"/>
<dbReference type="ProteomicsDB" id="57258">
    <molecule id="P61077-1"/>
</dbReference>
<dbReference type="ProteomicsDB" id="57259">
    <molecule id="P61077-2"/>
</dbReference>
<dbReference type="ProteomicsDB" id="57260">
    <molecule id="P61077-3"/>
</dbReference>
<dbReference type="Pumba" id="P61077"/>
<dbReference type="TopDownProteomics" id="P61077-1">
    <molecule id="P61077-1"/>
</dbReference>
<dbReference type="TopDownProteomics" id="P61077-2">
    <molecule id="P61077-2"/>
</dbReference>
<dbReference type="Antibodypedia" id="26052">
    <property type="antibodies" value="226 antibodies from 30 providers"/>
</dbReference>
<dbReference type="DNASU" id="7323"/>
<dbReference type="Ensembl" id="ENST00000321805.11">
    <molecule id="P61077-1"/>
    <property type="protein sequence ID" value="ENSP00000318494.7"/>
    <property type="gene ID" value="ENSG00000109332.20"/>
</dbReference>
<dbReference type="Ensembl" id="ENST00000338145.7">
    <molecule id="P61077-1"/>
    <property type="protein sequence ID" value="ENSP00000337208.3"/>
    <property type="gene ID" value="ENSG00000109332.20"/>
</dbReference>
<dbReference type="Ensembl" id="ENST00000343106.9">
    <molecule id="P61077-2"/>
    <property type="protein sequence ID" value="ENSP00000345285.5"/>
    <property type="gene ID" value="ENSG00000109332.20"/>
</dbReference>
<dbReference type="Ensembl" id="ENST00000349311.12">
    <molecule id="P61077-1"/>
    <property type="protein sequence ID" value="ENSP00000344069.8"/>
    <property type="gene ID" value="ENSG00000109332.20"/>
</dbReference>
<dbReference type="Ensembl" id="ENST00000357194.10">
    <molecule id="P61077-3"/>
    <property type="protein sequence ID" value="ENSP00000349722.6"/>
    <property type="gene ID" value="ENSG00000109332.20"/>
</dbReference>
<dbReference type="Ensembl" id="ENST00000394801.8">
    <molecule id="P61077-1"/>
    <property type="protein sequence ID" value="ENSP00000378280.4"/>
    <property type="gene ID" value="ENSG00000109332.20"/>
</dbReference>
<dbReference type="Ensembl" id="ENST00000394803.9">
    <molecule id="P61077-1"/>
    <property type="protein sequence ID" value="ENSP00000378282.5"/>
    <property type="gene ID" value="ENSG00000109332.20"/>
</dbReference>
<dbReference type="Ensembl" id="ENST00000394804.6">
    <molecule id="P61077-1"/>
    <property type="protein sequence ID" value="ENSP00000378283.2"/>
    <property type="gene ID" value="ENSG00000109332.20"/>
</dbReference>
<dbReference type="Ensembl" id="ENST00000453744.7">
    <molecule id="P61077-1"/>
    <property type="protein sequence ID" value="ENSP00000396901.2"/>
    <property type="gene ID" value="ENSG00000109332.20"/>
</dbReference>
<dbReference type="GeneID" id="7323"/>
<dbReference type="KEGG" id="hsa:7323"/>
<dbReference type="MANE-Select" id="ENST00000453744.7">
    <property type="protein sequence ID" value="ENSP00000396901.2"/>
    <property type="RefSeq nucleotide sequence ID" value="NM_181891.3"/>
    <property type="RefSeq protein sequence ID" value="NP_871620.1"/>
</dbReference>
<dbReference type="UCSC" id="uc003hwi.5">
    <molecule id="P61077-1"/>
    <property type="organism name" value="human"/>
</dbReference>
<dbReference type="AGR" id="HGNC:12476"/>
<dbReference type="CTD" id="7323"/>
<dbReference type="DisGeNET" id="7323"/>
<dbReference type="GeneCards" id="UBE2D3"/>
<dbReference type="HGNC" id="HGNC:12476">
    <property type="gene designation" value="UBE2D3"/>
</dbReference>
<dbReference type="HPA" id="ENSG00000109332">
    <property type="expression patterns" value="Low tissue specificity"/>
</dbReference>
<dbReference type="MIM" id="602963">
    <property type="type" value="gene"/>
</dbReference>
<dbReference type="neXtProt" id="NX_P61077"/>
<dbReference type="OpenTargets" id="ENSG00000109332"/>
<dbReference type="PharmGKB" id="PA37126"/>
<dbReference type="VEuPathDB" id="HostDB:ENSG00000109332"/>
<dbReference type="GeneTree" id="ENSGT00940000153169"/>
<dbReference type="InParanoid" id="P61077"/>
<dbReference type="OMA" id="NQMAREW"/>
<dbReference type="OrthoDB" id="7851174at2759"/>
<dbReference type="PAN-GO" id="P61077">
    <property type="GO annotations" value="4 GO annotations based on evolutionary models"/>
</dbReference>
<dbReference type="PhylomeDB" id="P61077"/>
<dbReference type="TreeFam" id="TF101108"/>
<dbReference type="BRENDA" id="2.3.2.23">
    <property type="organism ID" value="2681"/>
</dbReference>
<dbReference type="BRENDA" id="2.3.2.24">
    <property type="organism ID" value="2681"/>
</dbReference>
<dbReference type="PathwayCommons" id="P61077"/>
<dbReference type="Reactome" id="R-HSA-1234176">
    <property type="pathway name" value="Oxygen-dependent proline hydroxylation of Hypoxia-inducible Factor Alpha"/>
</dbReference>
<dbReference type="Reactome" id="R-HSA-168927">
    <property type="pathway name" value="TICAM1, RIP1-mediated IKK complex recruitment"/>
</dbReference>
<dbReference type="Reactome" id="R-HSA-201451">
    <property type="pathway name" value="Signaling by BMP"/>
</dbReference>
<dbReference type="Reactome" id="R-HSA-2173795">
    <property type="pathway name" value="Downregulation of SMAD2/3:SMAD4 transcriptional activity"/>
</dbReference>
<dbReference type="Reactome" id="R-HSA-5205685">
    <property type="pathway name" value="PINK1-PRKN Mediated Mitophagy"/>
</dbReference>
<dbReference type="Reactome" id="R-HSA-5357905">
    <property type="pathway name" value="Regulation of TNFR1 signaling"/>
</dbReference>
<dbReference type="Reactome" id="R-HSA-8866654">
    <property type="pathway name" value="E3 ubiquitin ligases ubiquitinate target proteins"/>
</dbReference>
<dbReference type="Reactome" id="R-HSA-8951664">
    <property type="pathway name" value="Neddylation"/>
</dbReference>
<dbReference type="Reactome" id="R-HSA-9033241">
    <property type="pathway name" value="Peroxisomal protein import"/>
</dbReference>
<dbReference type="Reactome" id="R-HSA-936440">
    <property type="pathway name" value="Negative regulators of DDX58/IFIH1 signaling"/>
</dbReference>
<dbReference type="Reactome" id="R-HSA-937041">
    <property type="pathway name" value="IKK complex recruitment mediated by RIP1"/>
</dbReference>
<dbReference type="Reactome" id="R-HSA-9705462">
    <property type="pathway name" value="Inactivation of CSF3 (G-CSF) signaling"/>
</dbReference>
<dbReference type="Reactome" id="R-HSA-983168">
    <property type="pathway name" value="Antigen processing: Ubiquitination &amp; Proteasome degradation"/>
</dbReference>
<dbReference type="SignaLink" id="P61077"/>
<dbReference type="SIGNOR" id="P61077"/>
<dbReference type="UniPathway" id="UPA00143"/>
<dbReference type="BioGRID-ORCS" id="7323">
    <property type="hits" value="583 hits in 1135 CRISPR screens"/>
</dbReference>
<dbReference type="ChiTaRS" id="UBE2D3">
    <property type="organism name" value="human"/>
</dbReference>
<dbReference type="EvolutionaryTrace" id="P61077"/>
<dbReference type="GeneWiki" id="UBE2D3"/>
<dbReference type="GenomeRNAi" id="7323"/>
<dbReference type="Pharos" id="P61077">
    <property type="development level" value="Tchem"/>
</dbReference>
<dbReference type="PRO" id="PR:P61077"/>
<dbReference type="Proteomes" id="UP000005640">
    <property type="component" value="Chromosome 4"/>
</dbReference>
<dbReference type="RNAct" id="P61077">
    <property type="molecule type" value="protein"/>
</dbReference>
<dbReference type="Bgee" id="ENSG00000109332">
    <property type="expression patterns" value="Expressed in secondary oocyte and 207 other cell types or tissues"/>
</dbReference>
<dbReference type="ExpressionAtlas" id="P61077">
    <property type="expression patterns" value="baseline and differential"/>
</dbReference>
<dbReference type="GO" id="GO:0005829">
    <property type="term" value="C:cytosol"/>
    <property type="evidence" value="ECO:0000304"/>
    <property type="project" value="Reactome"/>
</dbReference>
<dbReference type="GO" id="GO:0010008">
    <property type="term" value="C:endosome membrane"/>
    <property type="evidence" value="ECO:0007669"/>
    <property type="project" value="UniProtKB-SubCell"/>
</dbReference>
<dbReference type="GO" id="GO:0070062">
    <property type="term" value="C:extracellular exosome"/>
    <property type="evidence" value="ECO:0007005"/>
    <property type="project" value="UniProtKB"/>
</dbReference>
<dbReference type="GO" id="GO:0005654">
    <property type="term" value="C:nucleoplasm"/>
    <property type="evidence" value="ECO:0000304"/>
    <property type="project" value="Reactome"/>
</dbReference>
<dbReference type="GO" id="GO:0005634">
    <property type="term" value="C:nucleus"/>
    <property type="evidence" value="ECO:0000318"/>
    <property type="project" value="GO_Central"/>
</dbReference>
<dbReference type="GO" id="GO:0005886">
    <property type="term" value="C:plasma membrane"/>
    <property type="evidence" value="ECO:0007669"/>
    <property type="project" value="UniProtKB-SubCell"/>
</dbReference>
<dbReference type="GO" id="GO:0005524">
    <property type="term" value="F:ATP binding"/>
    <property type="evidence" value="ECO:0007669"/>
    <property type="project" value="UniProtKB-KW"/>
</dbReference>
<dbReference type="GO" id="GO:0061631">
    <property type="term" value="F:ubiquitin conjugating enzyme activity"/>
    <property type="evidence" value="ECO:0000314"/>
    <property type="project" value="UniProtKB"/>
</dbReference>
<dbReference type="GO" id="GO:0061630">
    <property type="term" value="F:ubiquitin protein ligase activity"/>
    <property type="evidence" value="ECO:0000314"/>
    <property type="project" value="GO_Central"/>
</dbReference>
<dbReference type="GO" id="GO:0004842">
    <property type="term" value="F:ubiquitin-protein transferase activity"/>
    <property type="evidence" value="ECO:0000314"/>
    <property type="project" value="UniProtKB"/>
</dbReference>
<dbReference type="GO" id="GO:0006915">
    <property type="term" value="P:apoptotic process"/>
    <property type="evidence" value="ECO:0007669"/>
    <property type="project" value="UniProtKB-KW"/>
</dbReference>
<dbReference type="GO" id="GO:0006281">
    <property type="term" value="P:DNA repair"/>
    <property type="evidence" value="ECO:0007669"/>
    <property type="project" value="UniProtKB-KW"/>
</dbReference>
<dbReference type="GO" id="GO:0030514">
    <property type="term" value="P:negative regulation of BMP signaling pathway"/>
    <property type="evidence" value="ECO:0000304"/>
    <property type="project" value="Reactome"/>
</dbReference>
<dbReference type="GO" id="GO:0000122">
    <property type="term" value="P:negative regulation of transcription by RNA polymerase II"/>
    <property type="evidence" value="ECO:0000304"/>
    <property type="project" value="Reactome"/>
</dbReference>
<dbReference type="GO" id="GO:1903955">
    <property type="term" value="P:positive regulation of protein targeting to mitochondrion"/>
    <property type="evidence" value="ECO:0007001"/>
    <property type="project" value="ParkinsonsUK-UCL"/>
</dbReference>
<dbReference type="GO" id="GO:0043161">
    <property type="term" value="P:proteasome-mediated ubiquitin-dependent protein catabolic process"/>
    <property type="evidence" value="ECO:0000314"/>
    <property type="project" value="UniProtKB"/>
</dbReference>
<dbReference type="GO" id="GO:0051865">
    <property type="term" value="P:protein autoubiquitination"/>
    <property type="evidence" value="ECO:0000314"/>
    <property type="project" value="ParkinsonsUK-UCL"/>
</dbReference>
<dbReference type="GO" id="GO:0070979">
    <property type="term" value="P:protein K11-linked ubiquitination"/>
    <property type="evidence" value="ECO:0000314"/>
    <property type="project" value="UniProtKB"/>
</dbReference>
<dbReference type="GO" id="GO:0070936">
    <property type="term" value="P:protein K48-linked ubiquitination"/>
    <property type="evidence" value="ECO:0000314"/>
    <property type="project" value="UniProtKB"/>
</dbReference>
<dbReference type="GO" id="GO:0085020">
    <property type="term" value="P:protein K6-linked ubiquitination"/>
    <property type="evidence" value="ECO:0000314"/>
    <property type="project" value="UniProtKB"/>
</dbReference>
<dbReference type="GO" id="GO:0036211">
    <property type="term" value="P:protein modification process"/>
    <property type="evidence" value="ECO:0000304"/>
    <property type="project" value="ProtInc"/>
</dbReference>
<dbReference type="GO" id="GO:0006513">
    <property type="term" value="P:protein monoubiquitination"/>
    <property type="evidence" value="ECO:0000314"/>
    <property type="project" value="UniProtKB"/>
</dbReference>
<dbReference type="GO" id="GO:0000209">
    <property type="term" value="P:protein polyubiquitination"/>
    <property type="evidence" value="ECO:0000314"/>
    <property type="project" value="UniProtKB"/>
</dbReference>
<dbReference type="GO" id="GO:0016567">
    <property type="term" value="P:protein ubiquitination"/>
    <property type="evidence" value="ECO:0000314"/>
    <property type="project" value="UniProtKB"/>
</dbReference>
<dbReference type="GO" id="GO:0006511">
    <property type="term" value="P:ubiquitin-dependent protein catabolic process"/>
    <property type="evidence" value="ECO:0000318"/>
    <property type="project" value="GO_Central"/>
</dbReference>
<dbReference type="CDD" id="cd23792">
    <property type="entry name" value="UBCc_UBE2D"/>
    <property type="match status" value="1"/>
</dbReference>
<dbReference type="FunFam" id="3.10.110.10:FF:000101">
    <property type="entry name" value="Ubiquitin-conjugating enzyme E2 D2"/>
    <property type="match status" value="1"/>
</dbReference>
<dbReference type="Gene3D" id="3.10.110.10">
    <property type="entry name" value="Ubiquitin Conjugating Enzyme"/>
    <property type="match status" value="1"/>
</dbReference>
<dbReference type="InterPro" id="IPR000608">
    <property type="entry name" value="UBQ-conjugat_E2_core"/>
</dbReference>
<dbReference type="InterPro" id="IPR023313">
    <property type="entry name" value="UBQ-conjugating_AS"/>
</dbReference>
<dbReference type="InterPro" id="IPR016135">
    <property type="entry name" value="UBQ-conjugating_enzyme/RWD"/>
</dbReference>
<dbReference type="PANTHER" id="PTHR24068">
    <property type="entry name" value="UBIQUITIN-CONJUGATING ENZYME E2"/>
    <property type="match status" value="1"/>
</dbReference>
<dbReference type="Pfam" id="PF00179">
    <property type="entry name" value="UQ_con"/>
    <property type="match status" value="1"/>
</dbReference>
<dbReference type="SMART" id="SM00212">
    <property type="entry name" value="UBCc"/>
    <property type="match status" value="1"/>
</dbReference>
<dbReference type="SUPFAM" id="SSF54495">
    <property type="entry name" value="UBC-like"/>
    <property type="match status" value="1"/>
</dbReference>
<dbReference type="PROSITE" id="PS00183">
    <property type="entry name" value="UBC_1"/>
    <property type="match status" value="1"/>
</dbReference>
<dbReference type="PROSITE" id="PS50127">
    <property type="entry name" value="UBC_2"/>
    <property type="match status" value="1"/>
</dbReference>
<reference key="1">
    <citation type="journal article" date="1995" name="J. Biol. Chem.">
        <title>Identification of a family of closely related human ubiquitin conjugating enzymes.</title>
        <authorList>
            <person name="Jensen J.P."/>
            <person name="Bates P.W."/>
            <person name="Yang M."/>
            <person name="Vierstra R.D."/>
            <person name="Weissman A.M."/>
        </authorList>
    </citation>
    <scope>NUCLEOTIDE SEQUENCE [MRNA] (ISOFORM 1)</scope>
</reference>
<reference key="2">
    <citation type="submission" date="1999-12" db="EMBL/GenBank/DDBJ databases">
        <title>Genome sequencing of the chromosome 4q region implicated in human hepatocellular carcinoma pathogenesis.</title>
        <authorList>
            <person name="Chang H.-M."/>
            <person name="Tsai S.-F."/>
        </authorList>
    </citation>
    <scope>NUCLEOTIDE SEQUENCE [GENOMIC DNA]</scope>
</reference>
<reference key="3">
    <citation type="journal article" date="2004" name="Nat. Genet.">
        <title>Complete sequencing and characterization of 21,243 full-length human cDNAs.</title>
        <authorList>
            <person name="Ota T."/>
            <person name="Suzuki Y."/>
            <person name="Nishikawa T."/>
            <person name="Otsuki T."/>
            <person name="Sugiyama T."/>
            <person name="Irie R."/>
            <person name="Wakamatsu A."/>
            <person name="Hayashi K."/>
            <person name="Sato H."/>
            <person name="Nagai K."/>
            <person name="Kimura K."/>
            <person name="Makita H."/>
            <person name="Sekine M."/>
            <person name="Obayashi M."/>
            <person name="Nishi T."/>
            <person name="Shibahara T."/>
            <person name="Tanaka T."/>
            <person name="Ishii S."/>
            <person name="Yamamoto J."/>
            <person name="Saito K."/>
            <person name="Kawai Y."/>
            <person name="Isono Y."/>
            <person name="Nakamura Y."/>
            <person name="Nagahari K."/>
            <person name="Murakami K."/>
            <person name="Yasuda T."/>
            <person name="Iwayanagi T."/>
            <person name="Wagatsuma M."/>
            <person name="Shiratori A."/>
            <person name="Sudo H."/>
            <person name="Hosoiri T."/>
            <person name="Kaku Y."/>
            <person name="Kodaira H."/>
            <person name="Kondo H."/>
            <person name="Sugawara M."/>
            <person name="Takahashi M."/>
            <person name="Kanda K."/>
            <person name="Yokoi T."/>
            <person name="Furuya T."/>
            <person name="Kikkawa E."/>
            <person name="Omura Y."/>
            <person name="Abe K."/>
            <person name="Kamihara K."/>
            <person name="Katsuta N."/>
            <person name="Sato K."/>
            <person name="Tanikawa M."/>
            <person name="Yamazaki M."/>
            <person name="Ninomiya K."/>
            <person name="Ishibashi T."/>
            <person name="Yamashita H."/>
            <person name="Murakawa K."/>
            <person name="Fujimori K."/>
            <person name="Tanai H."/>
            <person name="Kimata M."/>
            <person name="Watanabe M."/>
            <person name="Hiraoka S."/>
            <person name="Chiba Y."/>
            <person name="Ishida S."/>
            <person name="Ono Y."/>
            <person name="Takiguchi S."/>
            <person name="Watanabe S."/>
            <person name="Yosida M."/>
            <person name="Hotuta T."/>
            <person name="Kusano J."/>
            <person name="Kanehori K."/>
            <person name="Takahashi-Fujii A."/>
            <person name="Hara H."/>
            <person name="Tanase T.-O."/>
            <person name="Nomura Y."/>
            <person name="Togiya S."/>
            <person name="Komai F."/>
            <person name="Hara R."/>
            <person name="Takeuchi K."/>
            <person name="Arita M."/>
            <person name="Imose N."/>
            <person name="Musashino K."/>
            <person name="Yuuki H."/>
            <person name="Oshima A."/>
            <person name="Sasaki N."/>
            <person name="Aotsuka S."/>
            <person name="Yoshikawa Y."/>
            <person name="Matsunawa H."/>
            <person name="Ichihara T."/>
            <person name="Shiohata N."/>
            <person name="Sano S."/>
            <person name="Moriya S."/>
            <person name="Momiyama H."/>
            <person name="Satoh N."/>
            <person name="Takami S."/>
            <person name="Terashima Y."/>
            <person name="Suzuki O."/>
            <person name="Nakagawa S."/>
            <person name="Senoh A."/>
            <person name="Mizoguchi H."/>
            <person name="Goto Y."/>
            <person name="Shimizu F."/>
            <person name="Wakebe H."/>
            <person name="Hishigaki H."/>
            <person name="Watanabe T."/>
            <person name="Sugiyama A."/>
            <person name="Takemoto M."/>
            <person name="Kawakami B."/>
            <person name="Yamazaki M."/>
            <person name="Watanabe K."/>
            <person name="Kumagai A."/>
            <person name="Itakura S."/>
            <person name="Fukuzumi Y."/>
            <person name="Fujimori Y."/>
            <person name="Komiyama M."/>
            <person name="Tashiro H."/>
            <person name="Tanigami A."/>
            <person name="Fujiwara T."/>
            <person name="Ono T."/>
            <person name="Yamada K."/>
            <person name="Fujii Y."/>
            <person name="Ozaki K."/>
            <person name="Hirao M."/>
            <person name="Ohmori Y."/>
            <person name="Kawabata A."/>
            <person name="Hikiji T."/>
            <person name="Kobatake N."/>
            <person name="Inagaki H."/>
            <person name="Ikema Y."/>
            <person name="Okamoto S."/>
            <person name="Okitani R."/>
            <person name="Kawakami T."/>
            <person name="Noguchi S."/>
            <person name="Itoh T."/>
            <person name="Shigeta K."/>
            <person name="Senba T."/>
            <person name="Matsumura K."/>
            <person name="Nakajima Y."/>
            <person name="Mizuno T."/>
            <person name="Morinaga M."/>
            <person name="Sasaki M."/>
            <person name="Togashi T."/>
            <person name="Oyama M."/>
            <person name="Hata H."/>
            <person name="Watanabe M."/>
            <person name="Komatsu T."/>
            <person name="Mizushima-Sugano J."/>
            <person name="Satoh T."/>
            <person name="Shirai Y."/>
            <person name="Takahashi Y."/>
            <person name="Nakagawa K."/>
            <person name="Okumura K."/>
            <person name="Nagase T."/>
            <person name="Nomura N."/>
            <person name="Kikuchi H."/>
            <person name="Masuho Y."/>
            <person name="Yamashita R."/>
            <person name="Nakai K."/>
            <person name="Yada T."/>
            <person name="Nakamura Y."/>
            <person name="Ohara O."/>
            <person name="Isogai T."/>
            <person name="Sugano S."/>
        </authorList>
    </citation>
    <scope>NUCLEOTIDE SEQUENCE [LARGE SCALE MRNA] (ISOFORMS 2 AND 3)</scope>
    <source>
        <tissue>Chondrocyte</tissue>
        <tissue>Testis</tissue>
    </source>
</reference>
<reference key="4">
    <citation type="submission" date="2004-06" db="EMBL/GenBank/DDBJ databases">
        <title>Cloning of human full open reading frames in Gateway(TM) system entry vector (pDONR201).</title>
        <authorList>
            <person name="Ebert L."/>
            <person name="Schick M."/>
            <person name="Neubert P."/>
            <person name="Schatten R."/>
            <person name="Henze S."/>
            <person name="Korn B."/>
        </authorList>
    </citation>
    <scope>NUCLEOTIDE SEQUENCE [LARGE SCALE MRNA] (ISOFORM 1)</scope>
</reference>
<reference key="5">
    <citation type="journal article" date="2005" name="Nature">
        <title>Generation and annotation of the DNA sequences of human chromosomes 2 and 4.</title>
        <authorList>
            <person name="Hillier L.W."/>
            <person name="Graves T.A."/>
            <person name="Fulton R.S."/>
            <person name="Fulton L.A."/>
            <person name="Pepin K.H."/>
            <person name="Minx P."/>
            <person name="Wagner-McPherson C."/>
            <person name="Layman D."/>
            <person name="Wylie K."/>
            <person name="Sekhon M."/>
            <person name="Becker M.C."/>
            <person name="Fewell G.A."/>
            <person name="Delehaunty K.D."/>
            <person name="Miner T.L."/>
            <person name="Nash W.E."/>
            <person name="Kremitzki C."/>
            <person name="Oddy L."/>
            <person name="Du H."/>
            <person name="Sun H."/>
            <person name="Bradshaw-Cordum H."/>
            <person name="Ali J."/>
            <person name="Carter J."/>
            <person name="Cordes M."/>
            <person name="Harris A."/>
            <person name="Isak A."/>
            <person name="van Brunt A."/>
            <person name="Nguyen C."/>
            <person name="Du F."/>
            <person name="Courtney L."/>
            <person name="Kalicki J."/>
            <person name="Ozersky P."/>
            <person name="Abbott S."/>
            <person name="Armstrong J."/>
            <person name="Belter E.A."/>
            <person name="Caruso L."/>
            <person name="Cedroni M."/>
            <person name="Cotton M."/>
            <person name="Davidson T."/>
            <person name="Desai A."/>
            <person name="Elliott G."/>
            <person name="Erb T."/>
            <person name="Fronick C."/>
            <person name="Gaige T."/>
            <person name="Haakenson W."/>
            <person name="Haglund K."/>
            <person name="Holmes A."/>
            <person name="Harkins R."/>
            <person name="Kim K."/>
            <person name="Kruchowski S.S."/>
            <person name="Strong C.M."/>
            <person name="Grewal N."/>
            <person name="Goyea E."/>
            <person name="Hou S."/>
            <person name="Levy A."/>
            <person name="Martinka S."/>
            <person name="Mead K."/>
            <person name="McLellan M.D."/>
            <person name="Meyer R."/>
            <person name="Randall-Maher J."/>
            <person name="Tomlinson C."/>
            <person name="Dauphin-Kohlberg S."/>
            <person name="Kozlowicz-Reilly A."/>
            <person name="Shah N."/>
            <person name="Swearengen-Shahid S."/>
            <person name="Snider J."/>
            <person name="Strong J.T."/>
            <person name="Thompson J."/>
            <person name="Yoakum M."/>
            <person name="Leonard S."/>
            <person name="Pearman C."/>
            <person name="Trani L."/>
            <person name="Radionenko M."/>
            <person name="Waligorski J.E."/>
            <person name="Wang C."/>
            <person name="Rock S.M."/>
            <person name="Tin-Wollam A.-M."/>
            <person name="Maupin R."/>
            <person name="Latreille P."/>
            <person name="Wendl M.C."/>
            <person name="Yang S.-P."/>
            <person name="Pohl C."/>
            <person name="Wallis J.W."/>
            <person name="Spieth J."/>
            <person name="Bieri T.A."/>
            <person name="Berkowicz N."/>
            <person name="Nelson J.O."/>
            <person name="Osborne J."/>
            <person name="Ding L."/>
            <person name="Meyer R."/>
            <person name="Sabo A."/>
            <person name="Shotland Y."/>
            <person name="Sinha P."/>
            <person name="Wohldmann P.E."/>
            <person name="Cook L.L."/>
            <person name="Hickenbotham M.T."/>
            <person name="Eldred J."/>
            <person name="Williams D."/>
            <person name="Jones T.A."/>
            <person name="She X."/>
            <person name="Ciccarelli F.D."/>
            <person name="Izaurralde E."/>
            <person name="Taylor J."/>
            <person name="Schmutz J."/>
            <person name="Myers R.M."/>
            <person name="Cox D.R."/>
            <person name="Huang X."/>
            <person name="McPherson J.D."/>
            <person name="Mardis E.R."/>
            <person name="Clifton S.W."/>
            <person name="Warren W.C."/>
            <person name="Chinwalla A.T."/>
            <person name="Eddy S.R."/>
            <person name="Marra M.A."/>
            <person name="Ovcharenko I."/>
            <person name="Furey T.S."/>
            <person name="Miller W."/>
            <person name="Eichler E.E."/>
            <person name="Bork P."/>
            <person name="Suyama M."/>
            <person name="Torrents D."/>
            <person name="Waterston R.H."/>
            <person name="Wilson R.K."/>
        </authorList>
    </citation>
    <scope>NUCLEOTIDE SEQUENCE [LARGE SCALE GENOMIC DNA]</scope>
</reference>
<reference key="6">
    <citation type="submission" date="2005-07" db="EMBL/GenBank/DDBJ databases">
        <authorList>
            <person name="Mural R.J."/>
            <person name="Istrail S."/>
            <person name="Sutton G.G."/>
            <person name="Florea L."/>
            <person name="Halpern A.L."/>
            <person name="Mobarry C.M."/>
            <person name="Lippert R."/>
            <person name="Walenz B."/>
            <person name="Shatkay H."/>
            <person name="Dew I."/>
            <person name="Miller J.R."/>
            <person name="Flanigan M.J."/>
            <person name="Edwards N.J."/>
            <person name="Bolanos R."/>
            <person name="Fasulo D."/>
            <person name="Halldorsson B.V."/>
            <person name="Hannenhalli S."/>
            <person name="Turner R."/>
            <person name="Yooseph S."/>
            <person name="Lu F."/>
            <person name="Nusskern D.R."/>
            <person name="Shue B.C."/>
            <person name="Zheng X.H."/>
            <person name="Zhong F."/>
            <person name="Delcher A.L."/>
            <person name="Huson D.H."/>
            <person name="Kravitz S.A."/>
            <person name="Mouchard L."/>
            <person name="Reinert K."/>
            <person name="Remington K.A."/>
            <person name="Clark A.G."/>
            <person name="Waterman M.S."/>
            <person name="Eichler E.E."/>
            <person name="Adams M.D."/>
            <person name="Hunkapiller M.W."/>
            <person name="Myers E.W."/>
            <person name="Venter J.C."/>
        </authorList>
    </citation>
    <scope>NUCLEOTIDE SEQUENCE [LARGE SCALE GENOMIC DNA]</scope>
</reference>
<reference key="7">
    <citation type="journal article" date="2004" name="Genome Res.">
        <title>The status, quality, and expansion of the NIH full-length cDNA project: the Mammalian Gene Collection (MGC).</title>
        <authorList>
            <consortium name="The MGC Project Team"/>
        </authorList>
    </citation>
    <scope>NUCLEOTIDE SEQUENCE [LARGE SCALE MRNA] (ISOFORM 1)</scope>
    <source>
        <tissue>Brain</tissue>
        <tissue>Placenta</tissue>
    </source>
</reference>
<reference key="8">
    <citation type="journal article" date="1999" name="J. Biol. Chem.">
        <title>Identification of the ubiquitin carrier proteins, E2s, involved in signal-induced conjugation and subsequent degradation of IkappaBalpha.</title>
        <authorList>
            <person name="Gonen H."/>
            <person name="Bercovich B."/>
            <person name="Orian A."/>
            <person name="Carrano A."/>
            <person name="Takizawa C."/>
            <person name="Yamanaka K."/>
            <person name="Pagano M."/>
            <person name="Iwai K."/>
            <person name="Ciechanover A."/>
        </authorList>
    </citation>
    <scope>FUNCTION</scope>
    <scope>MUTAGENESIS OF CYS-85</scope>
</reference>
<reference key="9">
    <citation type="journal article" date="2001" name="EMBO Rep.">
        <title>CHIP is a chaperone-dependent E3 ligase that ubiquitylates unfolded protein.</title>
        <authorList>
            <person name="Murata S."/>
            <person name="Minami Y."/>
            <person name="Minami M."/>
            <person name="Chiba T."/>
            <person name="Tanaka K."/>
        </authorList>
    </citation>
    <scope>FUNCTION</scope>
</reference>
<reference key="10">
    <citation type="journal article" date="2003" name="Biochem. Biophys. Res. Commun.">
        <title>Mammalian Numb is a target protein of Mdm2, ubiquitin ligase.</title>
        <authorList>
            <person name="Yogosawa S."/>
            <person name="Miyauchi Y."/>
            <person name="Honda R."/>
            <person name="Tanaka H."/>
            <person name="Yasuda H."/>
        </authorList>
    </citation>
    <scope>FUNCTION</scope>
</reference>
<reference key="11">
    <citation type="journal article" date="2004" name="J. Biol. Chem.">
        <title>Topors functions as an E3 ubiquitin ligase with specific E2 enzymes and ubiquitinates p53.</title>
        <authorList>
            <person name="Rajendra R."/>
            <person name="Malegaonkar D."/>
            <person name="Pungaliya P."/>
            <person name="Marshall H."/>
            <person name="Rasheed Z."/>
            <person name="Brownell J."/>
            <person name="Liu L.F."/>
            <person name="Lutzker S."/>
            <person name="Saleem A."/>
            <person name="Rubin E.H."/>
        </authorList>
    </citation>
    <scope>FUNCTION</scope>
</reference>
<reference key="12">
    <citation type="journal article" date="2004" name="J. Biol. Chem.">
        <title>Regulation of p53 by the ubiquitin-conjugating enzymes UbcH5B/C in vivo.</title>
        <authorList>
            <person name="Saville M.K."/>
            <person name="Sparks A."/>
            <person name="Xirodimas D.P."/>
            <person name="Wardrop J."/>
            <person name="Stevenson L.F."/>
            <person name="Bourdon J.C."/>
            <person name="Woods Y.L."/>
            <person name="Lane D.P."/>
        </authorList>
    </citation>
    <scope>FUNCTION</scope>
</reference>
<reference key="13">
    <citation type="journal article" date="2004" name="J. Biol. Chem.">
        <title>The poxvirus p28 virulence factor is an E3 ubiquitin ligase.</title>
        <authorList>
            <person name="Huang J."/>
            <person name="Huang Q."/>
            <person name="Zhou X."/>
            <person name="Shen M.M."/>
            <person name="Yen A."/>
            <person name="Yu S.X."/>
            <person name="Dong G."/>
            <person name="Qu K."/>
            <person name="Huang P."/>
            <person name="Anderson E.M."/>
            <person name="Daniel-Issakani S."/>
            <person name="Buller R.M."/>
            <person name="Payan D.G."/>
            <person name="Lu H.H."/>
        </authorList>
    </citation>
    <scope>FUNCTION</scope>
</reference>
<reference key="14">
    <citation type="journal article" date="2006" name="EMBO J.">
        <title>A conserved pathway to activate BRCA1-dependent ubiquitylation at DNA damage sites.</title>
        <authorList>
            <person name="Polanowska J."/>
            <person name="Martin J.S."/>
            <person name="Garcia-Muse T."/>
            <person name="Petalcorin M.I.R."/>
            <person name="Boulton S.J."/>
        </authorList>
    </citation>
    <scope>INTERACTION WITH BRCA1</scope>
    <scope>FUNCTION</scope>
</reference>
<reference key="15">
    <citation type="journal article" date="2007" name="Mol. Cell">
        <title>E3-independent monoubiquitination of ubiquitin-binding proteins.</title>
        <authorList>
            <person name="Hoeller D."/>
            <person name="Hecker C.M."/>
            <person name="Wagner S."/>
            <person name="Rogov V."/>
            <person name="Doetsch V."/>
            <person name="Dikic I."/>
        </authorList>
    </citation>
    <scope>CATALYTIC ACTIVITY AS E3-INDEPENDENT E2 UBIQUITIN-CONJUGATING ENZYME</scope>
</reference>
<reference key="16">
    <citation type="journal article" date="2008" name="Biochem. Biophys. Res. Commun.">
        <title>Physical and functional interactions between ZIP kinase and UbcH5.</title>
        <authorList>
            <person name="Ohbayashi N."/>
            <person name="Okada K."/>
            <person name="Kawakami S."/>
            <person name="Togi S."/>
            <person name="Sato N."/>
            <person name="Ikeda O."/>
            <person name="Kamitani S."/>
            <person name="Muromoto R."/>
            <person name="Sekine Y."/>
            <person name="Kawai T."/>
            <person name="Akira S."/>
            <person name="Matsuda T."/>
        </authorList>
    </citation>
    <scope>INTERACTION WITH DAPK3</scope>
    <scope>FUNCTION</scope>
</reference>
<reference key="17">
    <citation type="journal article" date="2008" name="Cell Cycle">
        <title>PCNA is ubiquitinated by RNF8.</title>
        <authorList>
            <person name="Zhang S."/>
            <person name="Chea J."/>
            <person name="Meng X."/>
            <person name="Zhou Y."/>
            <person name="Lee E.Y.C."/>
            <person name="Lee M.Y.W.T."/>
        </authorList>
    </citation>
    <scope>FUNCTION</scope>
</reference>
<reference key="18">
    <citation type="journal article" date="2008" name="Mol. Biol. Cell">
        <title>Ubc4/5 and c-Cbl continue to ubiquitinate EGF receptor after internalization to facilitate polyubiquitination and degradation.</title>
        <authorList>
            <person name="Umebayashi K."/>
            <person name="Stenmark H."/>
            <person name="Yoshimori T."/>
        </authorList>
    </citation>
    <scope>FUNCTION</scope>
    <scope>SUBCELLULAR LOCATION</scope>
</reference>
<reference key="19">
    <citation type="journal article" date="2008" name="Mol. Cell">
        <title>Multimodal activation of the ubiquitin ligase SCF by Nedd8 conjugation.</title>
        <authorList>
            <person name="Saha A."/>
            <person name="Deshaies R.J."/>
        </authorList>
    </citation>
    <scope>INTERACTION WITH SCF COMPLEX</scope>
</reference>
<reference key="20">
    <citation type="journal article" date="2008" name="Mol. Microbiol.">
        <title>Legionella translocates an E3 ubiquitin ligase that has multiple U-boxes with distinct functions.</title>
        <authorList>
            <person name="Kubori T."/>
            <person name="Hyakutake A."/>
            <person name="Nagai H."/>
        </authorList>
    </citation>
    <scope>FUNCTION</scope>
</reference>
<reference key="21">
    <citation type="journal article" date="2010" name="J. Biol. Chem.">
        <title>The E2 ubiquitin-conjugating enzymes direct polyubiquitination to preferred lysines.</title>
        <authorList>
            <person name="David Y."/>
            <person name="Ziv T."/>
            <person name="Admon A."/>
            <person name="Navon A."/>
        </authorList>
    </citation>
    <scope>FUNCTION</scope>
    <scope>CATALYTIC ACTIVITY</scope>
</reference>
<reference key="22">
    <citation type="journal article" date="2010" name="J. Biol. Chem.">
        <title>The N terminus of Cbl-c regulates ubiquitin ligase activity by modulating affinity for the ubiquitin-conjugating enzyme.</title>
        <authorList>
            <person name="Ryan P.E."/>
            <person name="Sivadasan-Nair N."/>
            <person name="Nau M.M."/>
            <person name="Nicholas S."/>
            <person name="Lipkowitz S."/>
        </authorList>
    </citation>
    <scope>INTERACTION WITH CBLC</scope>
</reference>
<reference key="23">
    <citation type="journal article" date="2010" name="Mol. Cell">
        <title>Priming and extending: a UbcH5/Cdc34 E2 handoff mechanism for polyubiquitination on a SCF substrate.</title>
        <authorList>
            <person name="Wu K."/>
            <person name="Kovacev J."/>
            <person name="Pan Z.Q."/>
        </authorList>
    </citation>
    <scope>FUNCTION</scope>
</reference>
<reference key="24">
    <citation type="journal article" date="2011" name="BMC Syst. Biol.">
        <title>Initial characterization of the human central proteome.</title>
        <authorList>
            <person name="Burkard T.R."/>
            <person name="Planyavsky M."/>
            <person name="Kaupe I."/>
            <person name="Breitwieser F.P."/>
            <person name="Buerckstuemmer T."/>
            <person name="Bennett K.L."/>
            <person name="Superti-Furga G."/>
            <person name="Colinge J."/>
        </authorList>
    </citation>
    <scope>IDENTIFICATION BY MASS SPECTROMETRY [LARGE SCALE ANALYSIS]</scope>
</reference>
<reference key="25">
    <citation type="journal article" date="2011" name="Nature">
        <title>UBCH7 reactivity profile reveals parkin and HHARI to be RING/HECT hybrids.</title>
        <authorList>
            <person name="Wenzel D.M."/>
            <person name="Lissounov A."/>
            <person name="Brzovic P.S."/>
            <person name="Klevit R.E."/>
        </authorList>
    </citation>
    <scope>FUNCTION</scope>
    <scope>MUTAGENESIS OF ASN-77; ASP-87 AND ASP-117</scope>
</reference>
<reference key="26">
    <citation type="journal article" date="2014" name="Biochem. Biophys. Res. Commun.">
        <title>The UbL protein UBTD1 stably interacts with the UBE2D family of E2 ubiquitin conjugating enzymes.</title>
        <authorList>
            <person name="Uhler J.P."/>
            <person name="Spaahr H."/>
            <person name="Farge G."/>
            <person name="Clavel S."/>
            <person name="Larsson N.G."/>
            <person name="Falkenberg M."/>
            <person name="Samuelsson T."/>
            <person name="Gustafsson C.M."/>
        </authorList>
    </citation>
    <scope>INTERACTION WITH UBTD1</scope>
</reference>
<reference key="27">
    <citation type="journal article" date="2017" name="Cell Res.">
        <title>Ubiquitylation of p62/sequestosome1 activates its autophagy receptor function and controls selective autophagy upon ubiquitin stress.</title>
        <authorList>
            <person name="Peng H."/>
            <person name="Yang J."/>
            <person name="Li G."/>
            <person name="You Q."/>
            <person name="Han W."/>
            <person name="Li T."/>
            <person name="Gao D."/>
            <person name="Xie X."/>
            <person name="Lee B.H."/>
            <person name="Du J."/>
            <person name="Hou J."/>
            <person name="Zhang T."/>
            <person name="Rao H."/>
            <person name="Huang Y."/>
            <person name="Li Q."/>
            <person name="Zeng R."/>
            <person name="Hui L."/>
            <person name="Wang H."/>
            <person name="Xia Q."/>
            <person name="Zhang X."/>
            <person name="He Y."/>
            <person name="Komatsu M."/>
            <person name="Dikic I."/>
            <person name="Finley D."/>
            <person name="Hu R."/>
        </authorList>
    </citation>
    <scope>FUNCTION</scope>
</reference>
<reference key="28">
    <citation type="journal article" date="2017" name="Nat. Commun.">
        <title>Ube2D3 and Ube2N are essential for RIG-I-mediated MAVS aggregation in antiviral innate immunity.</title>
        <authorList>
            <person name="Shi Y."/>
            <person name="Yuan B."/>
            <person name="Zhu W."/>
            <person name="Zhang R."/>
            <person name="Li L."/>
            <person name="Hao X."/>
            <person name="Chen S."/>
            <person name="Hou F."/>
        </authorList>
    </citation>
    <scope>FUNCTION</scope>
    <scope>INTERACTION WITH RIGI AND RNF135</scope>
</reference>
<reference key="29">
    <citation type="journal article" date="2017" name="Nat. Commun.">
        <title>The E3 ubiquitin ligase and RNA-binding protein ZNF598 orchestrates ribosome quality control of premature polyadenylated mRNAs.</title>
        <authorList>
            <person name="Garzia A."/>
            <person name="Jafarnejad S.M."/>
            <person name="Meyer C."/>
            <person name="Chapat C."/>
            <person name="Gogakos T."/>
            <person name="Morozov P."/>
            <person name="Amiri M."/>
            <person name="Shapiro M."/>
            <person name="Molina H."/>
            <person name="Tuschl T."/>
            <person name="Sonenberg N."/>
        </authorList>
    </citation>
    <scope>FUNCTION</scope>
    <scope>CATALYTIC ACTIVITY</scope>
    <scope>PATHWAY</scope>
    <scope>INTERACTION WITH ZNF598</scope>
</reference>
<reference key="30">
    <citation type="journal article" date="2023" name="Mol. Cell">
        <title>Ring domains are essential for GATOR2-dependent mTORC1 activation.</title>
        <authorList>
            <person name="Jiang C."/>
            <person name="Dai X."/>
            <person name="He S."/>
            <person name="Zhou H."/>
            <person name="Fang L."/>
            <person name="Guo J."/>
            <person name="Liu S."/>
            <person name="Zhang T."/>
            <person name="Pan W."/>
            <person name="Yu H."/>
            <person name="Fu T."/>
            <person name="Li D."/>
            <person name="Inuzuka H."/>
            <person name="Wang P."/>
            <person name="Xiao J."/>
            <person name="Wei W."/>
        </authorList>
    </citation>
    <scope>FUNCTION</scope>
</reference>
<reference key="31">
    <citation type="journal article" date="2006" name="Mol. Cell">
        <title>A UbcH5/ubiquitin noncovalent complex is required for processive BRCA1-directed ubiquitination.</title>
        <authorList>
            <person name="Brzovic P.S."/>
            <person name="Lissounov A."/>
            <person name="Christensen D.E."/>
            <person name="Hoyt D.W."/>
            <person name="Klevit R.E."/>
        </authorList>
    </citation>
    <scope>STRUCTURE BY NMR OF 2-147 IN COMPLEX WITH THE BRCA1/BARD1 RING-DOMAIN HETERODIMER</scope>
    <scope>INTERACTION WITH BRCA1</scope>
</reference>
<reference key="32">
    <citation type="submission" date="2009-02" db="PDB data bank">
        <title>Crystal structure of UBCH5C.</title>
        <authorList>
            <person name="Nakanishi M."/>
            <person name="Teshima N."/>
            <person name="Mizushima T."/>
            <person name="Murata S."/>
            <person name="Tanaka K."/>
            <person name="Yamane T."/>
        </authorList>
    </citation>
    <scope>X-RAY CRYSTALLOGRAPHY (1.85 ANGSTROMS) OF 1-147</scope>
    <scope>DISULFIDE BOND</scope>
</reference>
<reference key="33">
    <citation type="submission" date="2010-05" db="PDB data bank">
        <title>Crystal structure of the U-Box domain of human e4b ubiquitin ligase in complex with UBCH5C E2 ubiquitin conjugating enzyme.</title>
        <authorList>
            <person name="Benirschke R."/>
            <person name="Thompson J.R."/>
            <person name="Mer G."/>
        </authorList>
    </citation>
    <scope>X-RAY CRYSTALLOGRAPHY (3.17 ANGSTROMS) OF 1-147 IN COMPLEX WITH U-BOX DOMAIN OF UBE4B</scope>
</reference>
<gene>
    <name type="primary">UBE2D3</name>
    <name type="synonym">UBC5C</name>
    <name type="synonym">UBCH5C</name>
</gene>
<comment type="function">
    <text evidence="4 5 6 7 8 9 11 13 14 15 17 18 19 21 23 24 25 26">Accepts ubiquitin from the E1 complex and catalyzes its covalent attachment to other proteins (PubMed:15247280, PubMed:15496420, PubMed:18284575, PubMed:20061386, PubMed:21532592, PubMed:28322253). In vitro catalyzes 'Lys-11'-, as well as 'Lys-48'-linked polyubiquitination (PubMed:15247280, PubMed:15496420, PubMed:18284575, PubMed:20061386, PubMed:21532592). Cooperates with the E2 CDC34 and the SCF(FBXW11) E3 ligase complex for the polyubiquitination of NFKBIA leading to its subsequent proteasomal degradation (PubMed:20347421). Acts as an initiator E2, priming the phosphorylated NFKBIA target at positions 'Lys-21' and/or 'Lys-22' with a monoubiquitin (PubMed:10329681). Ubiquitin chain elongation is then performed by CDC34, building ubiquitin chains from the UBE2D3-primed NFKBIA-linked ubiquitin (PubMed:10329681). Also acts as an initiator E2, in conjunction with RNF8, for the priming of PCNA (PubMed:18948756). Monoubiquitination of PCNA, and its subsequent polyubiquitination, are essential events in the operation of the DNA damage tolerance (DDT) pathway that is activated after DNA damage caused by UV or chemical agents during S-phase (PubMed:18948756). Associates with the BRCA1/BARD1 E3 ligase complex to perform ubiquitination at DNA damage sites following ionizing radiation leading to DNA repair (PubMed:16628214). Targets DAPK3 for ubiquitination which influences promyelocytic leukemia protein nuclear body (PML-NB) formation in the nucleus (PubMed:18515077). In conjunction with the MDM2 and TOPORS E3 ligases, functions ubiquitination of p53/TP53 (PubMed:12646252, PubMed:15280377). In conjunction with the CBL E3 ligase, targets EGFR for polyubiquitination at the plasma membrane as well as during its internalization and transport on endosomes (PubMed:18508924). In conjunction with the STUB1 E3 quality control E3 ligase, ubiquitinates unfolded proteins to catalyze their immediate destruction (PubMed:11743028). Together with RNF135, catalyzes the viral RNA-dependent 'Lys-63'-linked polyubiquitination of RIGI to activate the downstream signaling pathway that leads to interferon beta production (PubMed:28469175). Together with ZNF598, catalyzes ubiquitination of 40S ribosomal proteins in response to ribosome collisions (PubMed:28685749). In cooperation with the GATOR2 complex, catalyzes 'Lys-6'-linked ubiquitination of NPRL2 (PubMed:36528027).</text>
</comment>
<comment type="catalytic activity">
    <reaction evidence="2 3 18 25">
        <text>S-ubiquitinyl-[E1 ubiquitin-activating enzyme]-L-cysteine + [E2 ubiquitin-conjugating enzyme]-L-cysteine = [E1 ubiquitin-activating enzyme]-L-cysteine + S-ubiquitinyl-[E2 ubiquitin-conjugating enzyme]-L-cysteine.</text>
        <dbReference type="EC" id="2.3.2.23"/>
    </reaction>
</comment>
<comment type="catalytic activity">
    <reaction evidence="12">
        <text>S-ubiquitinyl-[E1 ubiquitin-activating enzyme]-L-cysteine + [acceptor protein]-L-lysine = [E1 ubiquitin-activating enzyme]-L-cysteine + N(6)-monoubiquitinyl-[acceptor protein]-L-lysine.</text>
        <dbReference type="EC" id="2.3.2.24"/>
    </reaction>
</comment>
<comment type="pathway">
    <text evidence="2 25">Protein modification; protein ubiquitination.</text>
</comment>
<comment type="subunit">
    <text evidence="10 11 15 16 20 22 24 28">Interacts with SCF (SKP1-CUL1-F-box protein) E3 ubiquitin ligase complex; when Cullin is neddylated, the interaction between the E2 and the SCF complex is strengthened. Interacts with DAPK3. Interacts with BRCA1; the DNA damage checkpoint promotes the association with BRCA1 after ionizing radiation. Interacts non-covalently with ubiquitin. Interacts with E3 ubiquitin-protein ligase CBLC. Interacts with UBTD1 (PubMed:24211586). Interacts with RIGI and RNF135; involved in RIGI ubiquitination and activation (PubMed:28469175).</text>
</comment>
<comment type="interaction">
    <interactant intactId="EBI-348268">
        <id>P61077</id>
    </interactant>
    <interactant intactId="EBI-740376">
        <id>Q86UW9</id>
        <label>DTX2</label>
    </interactant>
    <organismsDiffer>false</organismsDiffer>
    <experiments>9</experiments>
</comment>
<comment type="interaction">
    <interactant intactId="EBI-348268">
        <id>P61077</id>
    </interactant>
    <interactant intactId="EBI-2340258">
        <id>Q8N9I9</id>
        <label>DTX3</label>
    </interactant>
    <organismsDiffer>false</organismsDiffer>
    <experiments>4</experiments>
</comment>
<comment type="interaction">
    <interactant intactId="EBI-348268">
        <id>P61077</id>
    </interactant>
    <interactant intactId="EBI-356942">
        <id>P62879</id>
        <label>GNB2</label>
    </interactant>
    <organismsDiffer>false</organismsDiffer>
    <experiments>3</experiments>
</comment>
<comment type="interaction">
    <interactant intactId="EBI-348268">
        <id>P61077</id>
    </interactant>
    <interactant intactId="EBI-2340316">
        <id>O15344</id>
        <label>MID1</label>
    </interactant>
    <organismsDiffer>false</organismsDiffer>
    <experiments>8</experiments>
</comment>
<comment type="interaction">
    <interactant intactId="EBI-348268">
        <id>P61077</id>
    </interactant>
    <interactant intactId="EBI-10172526">
        <id>Q9UJV3-2</id>
        <label>MID2</label>
    </interactant>
    <organismsDiffer>false</organismsDiffer>
    <experiments>3</experiments>
</comment>
<comment type="interaction">
    <interactant intactId="EBI-348268">
        <id>P61077</id>
    </interactant>
    <interactant intactId="EBI-1058491">
        <id>Q96FW1</id>
        <label>OTUB1</label>
    </interactant>
    <organismsDiffer>false</organismsDiffer>
    <experiments>14</experiments>
</comment>
<comment type="interaction">
    <interactant intactId="EBI-348268">
        <id>P61077</id>
    </interactant>
    <interactant intactId="EBI-396669">
        <id>Q9Y3C5</id>
        <label>RNF11</label>
    </interactant>
    <organismsDiffer>false</organismsDiffer>
    <experiments>3</experiments>
</comment>
<comment type="interaction">
    <interactant intactId="EBI-348268">
        <id>P61077</id>
    </interactant>
    <interactant intactId="EBI-2129175">
        <id>Q6ZNA4</id>
        <label>RNF111</label>
    </interactant>
    <organismsDiffer>false</organismsDiffer>
    <experiments>5</experiments>
</comment>
<comment type="interaction">
    <interactant intactId="EBI-348268">
        <id>P61077</id>
    </interactant>
    <interactant intactId="EBI-2129242">
        <id>Q9Y4L5</id>
        <label>RNF115</label>
    </interactant>
    <organismsDiffer>false</organismsDiffer>
    <experiments>11</experiments>
</comment>
<comment type="interaction">
    <interactant intactId="EBI-348268">
        <id>P61077</id>
    </interactant>
    <interactant intactId="EBI-357322">
        <id>Q9BV68</id>
        <label>RNF126</label>
    </interactant>
    <organismsDiffer>false</organismsDiffer>
    <experiments>4</experiments>
</comment>
<comment type="interaction">
    <interactant intactId="EBI-348268">
        <id>P61077</id>
    </interactant>
    <interactant intactId="EBI-722416">
        <id>Q99496</id>
        <label>RNF2</label>
    </interactant>
    <organismsDiffer>false</organismsDiffer>
    <experiments>6</experiments>
</comment>
<comment type="interaction">
    <interactant intactId="EBI-348268">
        <id>P61077</id>
    </interactant>
    <interactant intactId="EBI-2129220">
        <id>Q96BH1</id>
        <label>RNF25</label>
    </interactant>
    <organismsDiffer>false</organismsDiffer>
    <experiments>8</experiments>
</comment>
<comment type="interaction">
    <interactant intactId="EBI-348268">
        <id>P61077</id>
    </interactant>
    <interactant intactId="EBI-1647060">
        <id>Q68DV7</id>
        <label>RNF43</label>
    </interactant>
    <organismsDiffer>false</organismsDiffer>
    <experiments>2</experiments>
</comment>
<comment type="interaction">
    <interactant intactId="EBI-348268">
        <id>P61077</id>
    </interactant>
    <interactant intactId="EBI-348482">
        <id>Q99942</id>
        <label>RNF5</label>
    </interactant>
    <organismsDiffer>false</organismsDiffer>
    <experiments>11</experiments>
</comment>
<comment type="interaction">
    <interactant intactId="EBI-348268">
        <id>P61077</id>
    </interactant>
    <interactant intactId="EBI-359276">
        <id>Q9Y4K3</id>
        <label>TRAF6</label>
    </interactant>
    <organismsDiffer>false</organismsDiffer>
    <experiments>2</experiments>
</comment>
<comment type="interaction">
    <interactant intactId="EBI-348268">
        <id>P61077</id>
    </interactant>
    <interactant intactId="EBI-739510">
        <id>Q9HCM9</id>
        <label>TRIM39</label>
    </interactant>
    <organismsDiffer>false</organismsDiffer>
    <experiments>6</experiments>
</comment>
<comment type="interaction">
    <interactant intactId="EBI-348268">
        <id>P61077</id>
    </interactant>
    <interactant intactId="EBI-11523450">
        <id>Q9HCM9-2</id>
        <label>TRIM39</label>
    </interactant>
    <organismsDiffer>false</organismsDiffer>
    <experiments>5</experiments>
</comment>
<comment type="interaction">
    <interactant intactId="EBI-348268">
        <id>P61077</id>
    </interactant>
    <interactant intactId="EBI-6929619">
        <id>Q9BVG3</id>
        <label>TRIM62</label>
    </interactant>
    <organismsDiffer>false</organismsDiffer>
    <experiments>3</experiments>
</comment>
<comment type="interaction">
    <interactant intactId="EBI-348268">
        <id>P61077</id>
    </interactant>
    <interactant intactId="EBI-745871">
        <id>Q9HAC8</id>
        <label>UBTD1</label>
    </interactant>
    <organismsDiffer>false</organismsDiffer>
    <experiments>6</experiments>
</comment>
<comment type="interaction">
    <interactant intactId="EBI-348268">
        <id>P61077</id>
    </interactant>
    <interactant intactId="EBI-517127">
        <id>P98170</id>
        <label>XIAP</label>
    </interactant>
    <organismsDiffer>false</organismsDiffer>
    <experiments>2</experiments>
</comment>
<comment type="interaction">
    <interactant intactId="EBI-348268">
        <id>P61077</id>
    </interactant>
    <interactant intactId="EBI-2129250">
        <id>Q8ND25</id>
        <label>ZNRF1</label>
    </interactant>
    <organismsDiffer>false</organismsDiffer>
    <experiments>3</experiments>
</comment>
<comment type="interaction">
    <interactant intactId="EBI-348268">
        <id>P61077</id>
    </interactant>
    <interactant intactId="EBI-77359">
        <id>O54784</id>
        <label>Dapk3</label>
    </interactant>
    <organismsDiffer>true</organismsDiffer>
    <experiments>2</experiments>
</comment>
<comment type="interaction">
    <interactant intactId="EBI-348268">
        <id>P61077</id>
    </interactant>
    <interactant intactId="EBI-9316527">
        <id>Q99PZ6</id>
        <label>ospG</label>
    </interactant>
    <organismsDiffer>true</organismsDiffer>
    <experiments>6</experiments>
</comment>
<comment type="interaction">
    <interactant intactId="EBI-348268">
        <id>P61077</id>
    </interactant>
    <interactant intactId="EBI-10761075">
        <id>P0CE12</id>
        <label>sspH2</label>
    </interactant>
    <organismsDiffer>true</organismsDiffer>
    <experiments>7</experiments>
</comment>
<comment type="interaction">
    <interactant intactId="EBI-15567256">
        <id>P61077-1</id>
    </interactant>
    <interactant intactId="EBI-15869194">
        <id>O95155-1</id>
        <label>UBE4B</label>
    </interactant>
    <organismsDiffer>false</organismsDiffer>
    <experiments>3</experiments>
</comment>
<comment type="subcellular location">
    <subcellularLocation>
        <location evidence="14">Cell membrane</location>
        <topology evidence="14">Peripheral membrane protein</topology>
    </subcellularLocation>
    <subcellularLocation>
        <location evidence="14">Endosome membrane</location>
        <topology evidence="14">Peripheral membrane protein</topology>
    </subcellularLocation>
</comment>
<comment type="alternative products">
    <event type="alternative splicing"/>
    <isoform>
        <id>P61077-1</id>
        <name>1</name>
        <sequence type="displayed"/>
    </isoform>
    <isoform>
        <id>P61077-2</id>
        <name>2</name>
        <sequence type="described" ref="VSP_038097"/>
    </isoform>
    <isoform>
        <id>P61077-3</id>
        <name>3</name>
        <sequence type="described" ref="VSP_038096"/>
    </isoform>
</comment>
<comment type="PTM">
    <text evidence="1">Phosphorylated by AURKB.</text>
</comment>
<comment type="similarity">
    <text evidence="2">Belongs to the ubiquitin-conjugating enzyme family.</text>
</comment>
<keyword id="KW-0002">3D-structure</keyword>
<keyword id="KW-0025">Alternative splicing</keyword>
<keyword id="KW-0053">Apoptosis</keyword>
<keyword id="KW-0067">ATP-binding</keyword>
<keyword id="KW-1003">Cell membrane</keyword>
<keyword id="KW-1015">Disulfide bond</keyword>
<keyword id="KW-0227">DNA damage</keyword>
<keyword id="KW-0234">DNA repair</keyword>
<keyword id="KW-0967">Endosome</keyword>
<keyword id="KW-0472">Membrane</keyword>
<keyword id="KW-0547">Nucleotide-binding</keyword>
<keyword id="KW-0597">Phosphoprotein</keyword>
<keyword id="KW-1267">Proteomics identification</keyword>
<keyword id="KW-1185">Reference proteome</keyword>
<keyword id="KW-0808">Transferase</keyword>
<keyword id="KW-0833">Ubl conjugation pathway</keyword>
<evidence type="ECO:0000250" key="1">
    <source>
        <dbReference type="UniProtKB" id="P61079"/>
    </source>
</evidence>
<evidence type="ECO:0000255" key="2">
    <source>
        <dbReference type="PROSITE-ProRule" id="PRU00388"/>
    </source>
</evidence>
<evidence type="ECO:0000255" key="3">
    <source>
        <dbReference type="PROSITE-ProRule" id="PRU10133"/>
    </source>
</evidence>
<evidence type="ECO:0000269" key="4">
    <source>
    </source>
</evidence>
<evidence type="ECO:0000269" key="5">
    <source>
    </source>
</evidence>
<evidence type="ECO:0000269" key="6">
    <source>
    </source>
</evidence>
<evidence type="ECO:0000269" key="7">
    <source>
    </source>
</evidence>
<evidence type="ECO:0000269" key="8">
    <source>
    </source>
</evidence>
<evidence type="ECO:0000269" key="9">
    <source>
    </source>
</evidence>
<evidence type="ECO:0000269" key="10">
    <source>
    </source>
</evidence>
<evidence type="ECO:0000269" key="11">
    <source>
    </source>
</evidence>
<evidence type="ECO:0000269" key="12">
    <source>
    </source>
</evidence>
<evidence type="ECO:0000269" key="13">
    <source>
    </source>
</evidence>
<evidence type="ECO:0000269" key="14">
    <source>
    </source>
</evidence>
<evidence type="ECO:0000269" key="15">
    <source>
    </source>
</evidence>
<evidence type="ECO:0000269" key="16">
    <source>
    </source>
</evidence>
<evidence type="ECO:0000269" key="17">
    <source>
    </source>
</evidence>
<evidence type="ECO:0000269" key="18">
    <source>
    </source>
</evidence>
<evidence type="ECO:0000269" key="19">
    <source>
    </source>
</evidence>
<evidence type="ECO:0000269" key="20">
    <source>
    </source>
</evidence>
<evidence type="ECO:0000269" key="21">
    <source>
    </source>
</evidence>
<evidence type="ECO:0000269" key="22">
    <source>
    </source>
</evidence>
<evidence type="ECO:0000269" key="23">
    <source>
    </source>
</evidence>
<evidence type="ECO:0000269" key="24">
    <source>
    </source>
</evidence>
<evidence type="ECO:0000269" key="25">
    <source>
    </source>
</evidence>
<evidence type="ECO:0000269" key="26">
    <source>
    </source>
</evidence>
<evidence type="ECO:0000269" key="27">
    <source ref="32"/>
</evidence>
<evidence type="ECO:0000269" key="28">
    <source ref="33"/>
</evidence>
<evidence type="ECO:0000303" key="29">
    <source>
    </source>
</evidence>
<evidence type="ECO:0000305" key="30"/>
<evidence type="ECO:0007829" key="31">
    <source>
        <dbReference type="PDB" id="2FUH"/>
    </source>
</evidence>
<evidence type="ECO:0007829" key="32">
    <source>
        <dbReference type="PDB" id="4R8P"/>
    </source>
</evidence>
<evidence type="ECO:0007829" key="33">
    <source>
        <dbReference type="PDB" id="4S3O"/>
    </source>
</evidence>
<evidence type="ECO:0007829" key="34">
    <source>
        <dbReference type="PDB" id="5EGG"/>
    </source>
</evidence>
<evidence type="ECO:0007829" key="35">
    <source>
        <dbReference type="PDB" id="6CP0"/>
    </source>
</evidence>
<evidence type="ECO:0007829" key="36">
    <source>
        <dbReference type="PDB" id="8SMZ"/>
    </source>
</evidence>
<organism>
    <name type="scientific">Homo sapiens</name>
    <name type="common">Human</name>
    <dbReference type="NCBI Taxonomy" id="9606"/>
    <lineage>
        <taxon>Eukaryota</taxon>
        <taxon>Metazoa</taxon>
        <taxon>Chordata</taxon>
        <taxon>Craniata</taxon>
        <taxon>Vertebrata</taxon>
        <taxon>Euteleostomi</taxon>
        <taxon>Mammalia</taxon>
        <taxon>Eutheria</taxon>
        <taxon>Euarchontoglires</taxon>
        <taxon>Primates</taxon>
        <taxon>Haplorrhini</taxon>
        <taxon>Catarrhini</taxon>
        <taxon>Hominidae</taxon>
        <taxon>Homo</taxon>
    </lineage>
</organism>
<protein>
    <recommendedName>
        <fullName>Ubiquitin-conjugating enzyme E2 D3</fullName>
        <ecNumber evidence="18 25">2.3.2.23</ecNumber>
    </recommendedName>
    <alternativeName>
        <fullName>(E3-independent) E2 ubiquitin-conjugating enzyme D3</fullName>
        <ecNumber evidence="12">2.3.2.24</ecNumber>
    </alternativeName>
    <alternativeName>
        <fullName>E2 ubiquitin-conjugating enzyme D3</fullName>
    </alternativeName>
    <alternativeName>
        <fullName>Ubiquitin carrier protein D3</fullName>
    </alternativeName>
    <alternativeName>
        <fullName>Ubiquitin-conjugating enzyme E2(17)KB 3</fullName>
    </alternativeName>
    <alternativeName>
        <fullName>Ubiquitin-conjugating enzyme E2-17 kDa 3</fullName>
    </alternativeName>
    <alternativeName>
        <fullName>Ubiquitin-protein ligase D3</fullName>
    </alternativeName>
</protein>
<proteinExistence type="evidence at protein level"/>
<sequence>MALKRINKELSDLARDPPAQCSAGPVGDDMFHWQATIMGPNDSPYQGGVFFLTIHFPTDYPFKPPKVAFTTRIYHPNINSNGSICLDILRSQWSPALTISKVLLSICSLLCDPNPDDPLVPEIARIYKTDRDKYNRISREWTQKYAM</sequence>